<accession>P63080</accession>
<accession>P15433</accession>
<accession>Q3UHR3</accession>
<proteinExistence type="evidence at protein level"/>
<evidence type="ECO:0000250" key="1">
    <source>
        <dbReference type="UniProtKB" id="P28472"/>
    </source>
</evidence>
<evidence type="ECO:0000250" key="2">
    <source>
        <dbReference type="UniProtKB" id="P63079"/>
    </source>
</evidence>
<evidence type="ECO:0000255" key="3"/>
<evidence type="ECO:0000269" key="4">
    <source>
    </source>
</evidence>
<evidence type="ECO:0000269" key="5">
    <source>
    </source>
</evidence>
<evidence type="ECO:0000269" key="6">
    <source>
    </source>
</evidence>
<evidence type="ECO:0000269" key="7">
    <source>
    </source>
</evidence>
<evidence type="ECO:0000305" key="8"/>
<evidence type="ECO:0000312" key="9">
    <source>
        <dbReference type="MGI" id="MGI:95621"/>
    </source>
</evidence>
<dbReference type="EMBL" id="U14420">
    <property type="protein sequence ID" value="AAB60502.1"/>
    <property type="molecule type" value="mRNA"/>
</dbReference>
<dbReference type="EMBL" id="AK039070">
    <property type="protein sequence ID" value="BAC30230.1"/>
    <property type="molecule type" value="mRNA"/>
</dbReference>
<dbReference type="EMBL" id="AK147247">
    <property type="protein sequence ID" value="BAE27794.1"/>
    <property type="molecule type" value="mRNA"/>
</dbReference>
<dbReference type="CCDS" id="CCDS21324.1"/>
<dbReference type="PIR" id="S53532">
    <property type="entry name" value="S53532"/>
</dbReference>
<dbReference type="RefSeq" id="NP_032097.1">
    <property type="nucleotide sequence ID" value="NM_008071.3"/>
</dbReference>
<dbReference type="SMR" id="P63080"/>
<dbReference type="BioGRID" id="199804">
    <property type="interactions" value="6"/>
</dbReference>
<dbReference type="ComplexPortal" id="CPX-2981">
    <property type="entry name" value="GABA-A receptor, alpha6-beta3-gamma2"/>
</dbReference>
<dbReference type="ComplexPortal" id="CPX-2982">
    <property type="entry name" value="GABA-A receptor, alpha-3/beta-3/gamma-2"/>
</dbReference>
<dbReference type="ComplexPortal" id="CPX-2983">
    <property type="entry name" value="GABA-A receptor, alpha1-beta3-gamma2"/>
</dbReference>
<dbReference type="ComplexPortal" id="CPX-2984">
    <property type="entry name" value="GABA-A receptor, alpha5-beta3-gamma2"/>
</dbReference>
<dbReference type="ComplexPortal" id="CPX-2985">
    <property type="entry name" value="GABA-A receptor, alpha2-beta3-gamma2"/>
</dbReference>
<dbReference type="ComplexPortal" id="CPX-2986">
    <property type="entry name" value="GABA-A receptor, alpha6-beta3-delta"/>
</dbReference>
<dbReference type="ComplexPortal" id="CPX-2989">
    <property type="entry name" value="GABA-A receptor, alpha4-beta3-delta"/>
</dbReference>
<dbReference type="FunCoup" id="P63080">
    <property type="interactions" value="848"/>
</dbReference>
<dbReference type="STRING" id="10090.ENSMUSP00000038051"/>
<dbReference type="ChEMBL" id="CHEMBL4296058"/>
<dbReference type="DrugCentral" id="P63080"/>
<dbReference type="GlyConnect" id="2326">
    <property type="glycosylation" value="3 N-Linked glycans (1 site)"/>
</dbReference>
<dbReference type="GlyCosmos" id="P63080">
    <property type="glycosylation" value="3 sites, 3 glycans"/>
</dbReference>
<dbReference type="GlyGen" id="P63080">
    <property type="glycosylation" value="4 sites, 6 N-linked glycans (2 sites), 1 O-linked glycan (1 site)"/>
</dbReference>
<dbReference type="iPTMnet" id="P63080"/>
<dbReference type="PhosphoSitePlus" id="P63080"/>
<dbReference type="SwissPalm" id="P63080"/>
<dbReference type="PaxDb" id="10090-ENSMUSP00000038051"/>
<dbReference type="PeptideAtlas" id="P63080"/>
<dbReference type="ProteomicsDB" id="273425"/>
<dbReference type="ABCD" id="P63080">
    <property type="antibodies" value="2 sequenced antibodies"/>
</dbReference>
<dbReference type="Antibodypedia" id="22323">
    <property type="antibodies" value="327 antibodies from 38 providers"/>
</dbReference>
<dbReference type="DNASU" id="14402"/>
<dbReference type="Ensembl" id="ENSMUST00000039697.14">
    <property type="protein sequence ID" value="ENSMUSP00000038051.8"/>
    <property type="gene ID" value="ENSMUSG00000033676.14"/>
</dbReference>
<dbReference type="GeneID" id="14402"/>
<dbReference type="KEGG" id="mmu:14402"/>
<dbReference type="UCSC" id="uc009hee.1">
    <property type="organism name" value="mouse"/>
</dbReference>
<dbReference type="AGR" id="MGI:95621"/>
<dbReference type="CTD" id="2562"/>
<dbReference type="MGI" id="MGI:95621">
    <property type="gene designation" value="Gabrb3"/>
</dbReference>
<dbReference type="VEuPathDB" id="HostDB:ENSMUSG00000033676"/>
<dbReference type="eggNOG" id="KOG3643">
    <property type="taxonomic scope" value="Eukaryota"/>
</dbReference>
<dbReference type="GeneTree" id="ENSGT00940000154713"/>
<dbReference type="InParanoid" id="P63080"/>
<dbReference type="OMA" id="YWVFYFL"/>
<dbReference type="PhylomeDB" id="P63080"/>
<dbReference type="Reactome" id="R-MMU-977443">
    <property type="pathway name" value="GABA receptor activation"/>
</dbReference>
<dbReference type="BioGRID-ORCS" id="14402">
    <property type="hits" value="3 hits in 79 CRISPR screens"/>
</dbReference>
<dbReference type="CD-CODE" id="CE726F99">
    <property type="entry name" value="Postsynaptic density"/>
</dbReference>
<dbReference type="ChiTaRS" id="Gabrb3">
    <property type="organism name" value="mouse"/>
</dbReference>
<dbReference type="PRO" id="PR:P63080"/>
<dbReference type="Proteomes" id="UP000000589">
    <property type="component" value="Chromosome 7"/>
</dbReference>
<dbReference type="RNAct" id="P63080">
    <property type="molecule type" value="protein"/>
</dbReference>
<dbReference type="Bgee" id="ENSMUSG00000033676">
    <property type="expression patterns" value="Expressed in olfactory tubercle and 150 other cell types or tissues"/>
</dbReference>
<dbReference type="ExpressionAtlas" id="P63080">
    <property type="expression patterns" value="baseline and differential"/>
</dbReference>
<dbReference type="GO" id="GO:0009986">
    <property type="term" value="C:cell surface"/>
    <property type="evidence" value="ECO:0000314"/>
    <property type="project" value="MGI"/>
</dbReference>
<dbReference type="GO" id="GO:0034707">
    <property type="term" value="C:chloride channel complex"/>
    <property type="evidence" value="ECO:0007669"/>
    <property type="project" value="UniProtKB-KW"/>
</dbReference>
<dbReference type="GO" id="GO:0030659">
    <property type="term" value="C:cytoplasmic vesicle membrane"/>
    <property type="evidence" value="ECO:0007669"/>
    <property type="project" value="UniProtKB-SubCell"/>
</dbReference>
<dbReference type="GO" id="GO:0043197">
    <property type="term" value="C:dendritic spine"/>
    <property type="evidence" value="ECO:0007669"/>
    <property type="project" value="Ensembl"/>
</dbReference>
<dbReference type="GO" id="GO:1902711">
    <property type="term" value="C:GABA-A receptor complex"/>
    <property type="evidence" value="ECO:0000315"/>
    <property type="project" value="UniProtKB"/>
</dbReference>
<dbReference type="GO" id="GO:0098982">
    <property type="term" value="C:GABA-ergic synapse"/>
    <property type="evidence" value="ECO:0000314"/>
    <property type="project" value="SynGO"/>
</dbReference>
<dbReference type="GO" id="GO:0060077">
    <property type="term" value="C:inhibitory synapse"/>
    <property type="evidence" value="ECO:0000266"/>
    <property type="project" value="MGI"/>
</dbReference>
<dbReference type="GO" id="GO:0005886">
    <property type="term" value="C:plasma membrane"/>
    <property type="evidence" value="ECO:0000250"/>
    <property type="project" value="UniProtKB"/>
</dbReference>
<dbReference type="GO" id="GO:0099634">
    <property type="term" value="C:postsynaptic specialization membrane"/>
    <property type="evidence" value="ECO:0000250"/>
    <property type="project" value="UniProtKB"/>
</dbReference>
<dbReference type="GO" id="GO:0004890">
    <property type="term" value="F:GABA-A receptor activity"/>
    <property type="evidence" value="ECO:0000315"/>
    <property type="project" value="UniProtKB"/>
</dbReference>
<dbReference type="GO" id="GO:0022851">
    <property type="term" value="F:GABA-gated chloride ion channel activity"/>
    <property type="evidence" value="ECO:0000315"/>
    <property type="project" value="UniProtKB"/>
</dbReference>
<dbReference type="GO" id="GO:0042802">
    <property type="term" value="F:identical protein binding"/>
    <property type="evidence" value="ECO:0007669"/>
    <property type="project" value="Ensembl"/>
</dbReference>
<dbReference type="GO" id="GO:0005216">
    <property type="term" value="F:monoatomic ion channel activity"/>
    <property type="evidence" value="ECO:0000314"/>
    <property type="project" value="MGI"/>
</dbReference>
<dbReference type="GO" id="GO:1904315">
    <property type="term" value="F:transmitter-gated monoatomic ion channel activity involved in regulation of postsynaptic membrane potential"/>
    <property type="evidence" value="ECO:0000314"/>
    <property type="project" value="SynGO"/>
</dbReference>
<dbReference type="GO" id="GO:0007420">
    <property type="term" value="P:brain development"/>
    <property type="evidence" value="ECO:0000315"/>
    <property type="project" value="MGI"/>
</dbReference>
<dbReference type="GO" id="GO:0071420">
    <property type="term" value="P:cellular response to histamine"/>
    <property type="evidence" value="ECO:0000250"/>
    <property type="project" value="UniProtKB"/>
</dbReference>
<dbReference type="GO" id="GO:0071294">
    <property type="term" value="P:cellular response to zinc ion"/>
    <property type="evidence" value="ECO:0000314"/>
    <property type="project" value="MGI"/>
</dbReference>
<dbReference type="GO" id="GO:0021549">
    <property type="term" value="P:cerebellum development"/>
    <property type="evidence" value="ECO:0000315"/>
    <property type="project" value="MGI"/>
</dbReference>
<dbReference type="GO" id="GO:1902476">
    <property type="term" value="P:chloride transmembrane transport"/>
    <property type="evidence" value="ECO:0000315"/>
    <property type="project" value="UniProtKB"/>
</dbReference>
<dbReference type="GO" id="GO:0042747">
    <property type="term" value="P:circadian sleep/wake cycle, REM sleep"/>
    <property type="evidence" value="ECO:0000315"/>
    <property type="project" value="MGI"/>
</dbReference>
<dbReference type="GO" id="GO:0090102">
    <property type="term" value="P:cochlea development"/>
    <property type="evidence" value="ECO:0000315"/>
    <property type="project" value="DFLAT"/>
</dbReference>
<dbReference type="GO" id="GO:0035640">
    <property type="term" value="P:exploration behavior"/>
    <property type="evidence" value="ECO:0000315"/>
    <property type="project" value="MGI"/>
</dbReference>
<dbReference type="GO" id="GO:0007214">
    <property type="term" value="P:gamma-aminobutyric acid signaling pathway"/>
    <property type="evidence" value="ECO:0000250"/>
    <property type="project" value="UniProtKB"/>
</dbReference>
<dbReference type="GO" id="GO:0060022">
    <property type="term" value="P:hard palate development"/>
    <property type="evidence" value="ECO:0000314"/>
    <property type="project" value="MGI"/>
</dbReference>
<dbReference type="GO" id="GO:0060080">
    <property type="term" value="P:inhibitory postsynaptic potential"/>
    <property type="evidence" value="ECO:0000315"/>
    <property type="project" value="CACAO"/>
</dbReference>
<dbReference type="GO" id="GO:1904862">
    <property type="term" value="P:inhibitory synapse assembly"/>
    <property type="evidence" value="ECO:0000314"/>
    <property type="project" value="UniProtKB"/>
</dbReference>
<dbReference type="GO" id="GO:0060119">
    <property type="term" value="P:inner ear receptor cell development"/>
    <property type="evidence" value="ECO:0000315"/>
    <property type="project" value="DFLAT"/>
</dbReference>
<dbReference type="GO" id="GO:0060384">
    <property type="term" value="P:innervation"/>
    <property type="evidence" value="ECO:0000315"/>
    <property type="project" value="DFLAT"/>
</dbReference>
<dbReference type="GO" id="GO:0007612">
    <property type="term" value="P:learning"/>
    <property type="evidence" value="ECO:0000315"/>
    <property type="project" value="MGI"/>
</dbReference>
<dbReference type="GO" id="GO:0007613">
    <property type="term" value="P:memory"/>
    <property type="evidence" value="ECO:0000315"/>
    <property type="project" value="MGI"/>
</dbReference>
<dbReference type="GO" id="GO:0061744">
    <property type="term" value="P:motor behavior"/>
    <property type="evidence" value="ECO:0000315"/>
    <property type="project" value="MGI"/>
</dbReference>
<dbReference type="GO" id="GO:0007399">
    <property type="term" value="P:nervous system development"/>
    <property type="evidence" value="ECO:0000315"/>
    <property type="project" value="MGI"/>
</dbReference>
<dbReference type="GO" id="GO:0048666">
    <property type="term" value="P:neuron development"/>
    <property type="evidence" value="ECO:0000315"/>
    <property type="project" value="DFLAT"/>
</dbReference>
<dbReference type="GO" id="GO:0019098">
    <property type="term" value="P:reproductive behavior"/>
    <property type="evidence" value="ECO:0000315"/>
    <property type="project" value="MGI"/>
</dbReference>
<dbReference type="GO" id="GO:0072347">
    <property type="term" value="P:response to anesthetic"/>
    <property type="evidence" value="ECO:0000315"/>
    <property type="project" value="MGI"/>
</dbReference>
<dbReference type="GO" id="GO:0009410">
    <property type="term" value="P:response to xenobiotic stimulus"/>
    <property type="evidence" value="ECO:0000315"/>
    <property type="project" value="MGI"/>
</dbReference>
<dbReference type="GO" id="GO:0060021">
    <property type="term" value="P:roof of mouth development"/>
    <property type="evidence" value="ECO:0000315"/>
    <property type="project" value="UniProtKB"/>
</dbReference>
<dbReference type="GO" id="GO:0035176">
    <property type="term" value="P:social behavior"/>
    <property type="evidence" value="ECO:0000315"/>
    <property type="project" value="MGI"/>
</dbReference>
<dbReference type="GO" id="GO:0051932">
    <property type="term" value="P:synaptic transmission, GABAergic"/>
    <property type="evidence" value="ECO:0000303"/>
    <property type="project" value="ComplexPortal"/>
</dbReference>
<dbReference type="CDD" id="cd18999">
    <property type="entry name" value="LGIC_ECD_GABAAR_B"/>
    <property type="match status" value="1"/>
</dbReference>
<dbReference type="CDD" id="cd19053">
    <property type="entry name" value="LGIC_TM_GABAAR_beta"/>
    <property type="match status" value="1"/>
</dbReference>
<dbReference type="FunFam" id="1.20.58.390:FF:000004">
    <property type="entry name" value="Gamma-aminobutyric acid receptor subunit beta-2 isoform A"/>
    <property type="match status" value="1"/>
</dbReference>
<dbReference type="FunFam" id="2.70.170.10:FF:000004">
    <property type="entry name" value="Gamma-aminobutyric acid receptor subunit beta-2 isoform A"/>
    <property type="match status" value="1"/>
</dbReference>
<dbReference type="Gene3D" id="2.70.170.10">
    <property type="entry name" value="Neurotransmitter-gated ion-channel ligand-binding domain"/>
    <property type="match status" value="1"/>
</dbReference>
<dbReference type="Gene3D" id="1.20.58.390">
    <property type="entry name" value="Neurotransmitter-gated ion-channel transmembrane domain"/>
    <property type="match status" value="1"/>
</dbReference>
<dbReference type="InterPro" id="IPR006028">
    <property type="entry name" value="GABAA/Glycine_rcpt"/>
</dbReference>
<dbReference type="InterPro" id="IPR002289">
    <property type="entry name" value="GABAAb_rcpt"/>
</dbReference>
<dbReference type="InterPro" id="IPR006202">
    <property type="entry name" value="Neur_chan_lig-bd"/>
</dbReference>
<dbReference type="InterPro" id="IPR036734">
    <property type="entry name" value="Neur_chan_lig-bd_sf"/>
</dbReference>
<dbReference type="InterPro" id="IPR006201">
    <property type="entry name" value="Neur_channel"/>
</dbReference>
<dbReference type="InterPro" id="IPR036719">
    <property type="entry name" value="Neuro-gated_channel_TM_sf"/>
</dbReference>
<dbReference type="InterPro" id="IPR038050">
    <property type="entry name" value="Neuro_actylchol_rec"/>
</dbReference>
<dbReference type="InterPro" id="IPR006029">
    <property type="entry name" value="Neurotrans-gated_channel_TM"/>
</dbReference>
<dbReference type="InterPro" id="IPR018000">
    <property type="entry name" value="Neurotransmitter_ion_chnl_CS"/>
</dbReference>
<dbReference type="NCBIfam" id="TIGR00860">
    <property type="entry name" value="LIC"/>
    <property type="match status" value="1"/>
</dbReference>
<dbReference type="PANTHER" id="PTHR18945">
    <property type="entry name" value="NEUROTRANSMITTER GATED ION CHANNEL"/>
    <property type="match status" value="1"/>
</dbReference>
<dbReference type="Pfam" id="PF02931">
    <property type="entry name" value="Neur_chan_LBD"/>
    <property type="match status" value="1"/>
</dbReference>
<dbReference type="Pfam" id="PF02932">
    <property type="entry name" value="Neur_chan_memb"/>
    <property type="match status" value="1"/>
</dbReference>
<dbReference type="PRINTS" id="PR01160">
    <property type="entry name" value="GABAARBETA"/>
</dbReference>
<dbReference type="PRINTS" id="PR00253">
    <property type="entry name" value="GABAARECEPTR"/>
</dbReference>
<dbReference type="PRINTS" id="PR00252">
    <property type="entry name" value="NRIONCHANNEL"/>
</dbReference>
<dbReference type="SUPFAM" id="SSF90112">
    <property type="entry name" value="Neurotransmitter-gated ion-channel transmembrane pore"/>
    <property type="match status" value="1"/>
</dbReference>
<dbReference type="SUPFAM" id="SSF63712">
    <property type="entry name" value="Nicotinic receptor ligand binding domain-like"/>
    <property type="match status" value="1"/>
</dbReference>
<dbReference type="PROSITE" id="PS00236">
    <property type="entry name" value="NEUROTR_ION_CHANNEL"/>
    <property type="match status" value="1"/>
</dbReference>
<comment type="function">
    <text evidence="1 2 4 5 7">Beta subunit of the heteropentameric ligand-gated chloride channel gated by gamma-aminobutyric acid (GABA), a major inhibitory neurotransmitter in the brain (PubMed:9108119). GABA-gated chloride channels, also named GABA(A) receptors (GABAAR), consist of five subunits arranged around a central pore and contain GABA active binding site(s) located at the alpha and beta subunit interface(s) (By similarity). GABAARs containing beta-3/GABRB3 subunit are found at both synaptic and extrasynaptic sites (By similarity). When activated by GABA, GABAARs selectively allow the flow of chloride anions across the cell membrane down their electrochemical gradient (PubMed:9108119). Chloride influx into the postsynaptic neuron following GABAAR opening decreases the neuron ability to generate a new action potential, thereby reducing nerve transmission (PubMed:9108119). GABAARs containing alpha-1 and beta-3 subunits exhibit synaptogenic activity; the gamma-2 subunit being necessary but not sufficient to induce rapid synaptic contacts formation (PubMed:27129275). Extrasynaptic beta-3 receptors contribute to the tonic GABAergic inhibition (By similarity). GABAARs containing alpha-1, beta-3 and epsilon subunits may permit spontaneous chloride channel activity while preserving the structural information required for GABA-gated openings (By similarity). Beta-containing GABAARs can simultaneously bind GABA and histamine where histamine binds at the interface of two neighboring beta subunits, which may be involved in the regulation of sleep and wakefulness (By similarity). Plays an important role in somatosensation and in the production of antinociception (PubMed:10670447).</text>
</comment>
<comment type="catalytic activity">
    <reaction evidence="7">
        <text>chloride(in) = chloride(out)</text>
        <dbReference type="Rhea" id="RHEA:29823"/>
        <dbReference type="ChEBI" id="CHEBI:17996"/>
    </reaction>
</comment>
<comment type="activity regulation">
    <text evidence="1">Potentiated by histamine.</text>
</comment>
<comment type="subunit">
    <text evidence="1 2 6">Heteropentamer, formed by a combination of alpha (GABRA1-6), beta (GABRB1-3), gamma (GABRG1-3), delta (GABRD), epsilon (GABRE), rho (GABRR1-3), pi (GABRP) and theta (GABRQ) chains, each subunit exhibiting distinct physiological and pharmacological properties (By similarity). Can form functional homopentamers (in vitro) (By similarity). Interacts with UBQLN1 (By similarity). May interact with KIF21B (By similarity). Identified in a complex of 720 kDa composed of LHFPL4, NLGN2, GABRA1, GABRB2, GABRG2 and GABRB3 (By similarity). Interacts with LHFPL4 (PubMed:28978485). Interacts with GIT1; this interaction is required for synaptic GABRB3 surface stability and inhibitory synapse strength (By similarity).</text>
</comment>
<comment type="subcellular location">
    <subcellularLocation>
        <location evidence="1">Postsynaptic cell membrane</location>
        <topology evidence="3">Multi-pass membrane protein</topology>
    </subcellularLocation>
    <subcellularLocation>
        <location evidence="6">Cell membrane</location>
        <topology evidence="1">Multi-pass membrane protein</topology>
    </subcellularLocation>
    <subcellularLocation>
        <location evidence="2">Cytoplasmic vesicle membrane</location>
    </subcellularLocation>
</comment>
<comment type="domain">
    <text evidence="1">GABAARs subunits share a common topological structure: a peptide sequence made up of a long extracellular N-terminal, four transmembrane domains, intracellular or cytoplasmic domain located between the third and the fourth transmembrane domains.</text>
</comment>
<comment type="disruption phenotype">
    <text evidence="4 7">Important perinatal lethality. About 57% of the pups have a cleft palate. About 90% of the pups die within 24 hours after birth, including 30% of those that do not have a cleft palate. Surviving mice are runted until weaning, but attain normal body weight in adulthood. They are hyperactive and display behavorial abnormalities. They do not display jerky gait, but have difficulty with swimming, walking on grids, and avoiding to fall from rotarods. Mutant mice are fertile, but females do not display normal nurturing behavior. Mutant mice have abnormal electroencephalograms (EEGs) and tend to suffer from seizures. Brains from mutant mice show strongly reduced numbers of GABA and benzodiazepine receptors. Neurons from dorsal root ganglion show a decrease of about 80% of GABA-induced chloride currents. In addition, mutant mice have an average lifespan of about 18 weeks, instead of the expected 127 weeks (PubMed:9108119). Mutant mice display a lowered threshold to nociception and are abnormally sensitive to touch and heat stimuli. GABA receptor agonists have decreased antinociceptive effects in mutant mice (PubMed:10670447).</text>
</comment>
<comment type="similarity">
    <text evidence="8">Belongs to the ligand-gated ion channel (TC 1.A.9) family. Gamma-aminobutyric acid receptor (TC 1.A.9.5) subfamily. GABRB3 sub-subfamily.</text>
</comment>
<reference key="1">
    <citation type="journal article" date="1995" name="Biochim. Biophys. Acta">
        <title>GABAA receptor beta 1, beta 2, and beta 3 subunits: comparisons in DBA/2J and C57BL/6J mice.</title>
        <authorList>
            <person name="Kamatchi G.L."/>
            <person name="Kofuji P."/>
            <person name="Wang J.B."/>
            <person name="Fernando J.C."/>
            <person name="Liu Z."/>
            <person name="Mathura J.R."/>
            <person name="Burt D.R."/>
        </authorList>
    </citation>
    <scope>NUCLEOTIDE SEQUENCE [MRNA]</scope>
    <source>
        <strain>DBA/2J</strain>
        <tissue>Brain</tissue>
    </source>
</reference>
<reference key="2">
    <citation type="journal article" date="2005" name="Science">
        <title>The transcriptional landscape of the mammalian genome.</title>
        <authorList>
            <person name="Carninci P."/>
            <person name="Kasukawa T."/>
            <person name="Katayama S."/>
            <person name="Gough J."/>
            <person name="Frith M.C."/>
            <person name="Maeda N."/>
            <person name="Oyama R."/>
            <person name="Ravasi T."/>
            <person name="Lenhard B."/>
            <person name="Wells C."/>
            <person name="Kodzius R."/>
            <person name="Shimokawa K."/>
            <person name="Bajic V.B."/>
            <person name="Brenner S.E."/>
            <person name="Batalov S."/>
            <person name="Forrest A.R."/>
            <person name="Zavolan M."/>
            <person name="Davis M.J."/>
            <person name="Wilming L.G."/>
            <person name="Aidinis V."/>
            <person name="Allen J.E."/>
            <person name="Ambesi-Impiombato A."/>
            <person name="Apweiler R."/>
            <person name="Aturaliya R.N."/>
            <person name="Bailey T.L."/>
            <person name="Bansal M."/>
            <person name="Baxter L."/>
            <person name="Beisel K.W."/>
            <person name="Bersano T."/>
            <person name="Bono H."/>
            <person name="Chalk A.M."/>
            <person name="Chiu K.P."/>
            <person name="Choudhary V."/>
            <person name="Christoffels A."/>
            <person name="Clutterbuck D.R."/>
            <person name="Crowe M.L."/>
            <person name="Dalla E."/>
            <person name="Dalrymple B.P."/>
            <person name="de Bono B."/>
            <person name="Della Gatta G."/>
            <person name="di Bernardo D."/>
            <person name="Down T."/>
            <person name="Engstrom P."/>
            <person name="Fagiolini M."/>
            <person name="Faulkner G."/>
            <person name="Fletcher C.F."/>
            <person name="Fukushima T."/>
            <person name="Furuno M."/>
            <person name="Futaki S."/>
            <person name="Gariboldi M."/>
            <person name="Georgii-Hemming P."/>
            <person name="Gingeras T.R."/>
            <person name="Gojobori T."/>
            <person name="Green R.E."/>
            <person name="Gustincich S."/>
            <person name="Harbers M."/>
            <person name="Hayashi Y."/>
            <person name="Hensch T.K."/>
            <person name="Hirokawa N."/>
            <person name="Hill D."/>
            <person name="Huminiecki L."/>
            <person name="Iacono M."/>
            <person name="Ikeo K."/>
            <person name="Iwama A."/>
            <person name="Ishikawa T."/>
            <person name="Jakt M."/>
            <person name="Kanapin A."/>
            <person name="Katoh M."/>
            <person name="Kawasawa Y."/>
            <person name="Kelso J."/>
            <person name="Kitamura H."/>
            <person name="Kitano H."/>
            <person name="Kollias G."/>
            <person name="Krishnan S.P."/>
            <person name="Kruger A."/>
            <person name="Kummerfeld S.K."/>
            <person name="Kurochkin I.V."/>
            <person name="Lareau L.F."/>
            <person name="Lazarevic D."/>
            <person name="Lipovich L."/>
            <person name="Liu J."/>
            <person name="Liuni S."/>
            <person name="McWilliam S."/>
            <person name="Madan Babu M."/>
            <person name="Madera M."/>
            <person name="Marchionni L."/>
            <person name="Matsuda H."/>
            <person name="Matsuzawa S."/>
            <person name="Miki H."/>
            <person name="Mignone F."/>
            <person name="Miyake S."/>
            <person name="Morris K."/>
            <person name="Mottagui-Tabar S."/>
            <person name="Mulder N."/>
            <person name="Nakano N."/>
            <person name="Nakauchi H."/>
            <person name="Ng P."/>
            <person name="Nilsson R."/>
            <person name="Nishiguchi S."/>
            <person name="Nishikawa S."/>
            <person name="Nori F."/>
            <person name="Ohara O."/>
            <person name="Okazaki Y."/>
            <person name="Orlando V."/>
            <person name="Pang K.C."/>
            <person name="Pavan W.J."/>
            <person name="Pavesi G."/>
            <person name="Pesole G."/>
            <person name="Petrovsky N."/>
            <person name="Piazza S."/>
            <person name="Reed J."/>
            <person name="Reid J.F."/>
            <person name="Ring B.Z."/>
            <person name="Ringwald M."/>
            <person name="Rost B."/>
            <person name="Ruan Y."/>
            <person name="Salzberg S.L."/>
            <person name="Sandelin A."/>
            <person name="Schneider C."/>
            <person name="Schoenbach C."/>
            <person name="Sekiguchi K."/>
            <person name="Semple C.A."/>
            <person name="Seno S."/>
            <person name="Sessa L."/>
            <person name="Sheng Y."/>
            <person name="Shibata Y."/>
            <person name="Shimada H."/>
            <person name="Shimada K."/>
            <person name="Silva D."/>
            <person name="Sinclair B."/>
            <person name="Sperling S."/>
            <person name="Stupka E."/>
            <person name="Sugiura K."/>
            <person name="Sultana R."/>
            <person name="Takenaka Y."/>
            <person name="Taki K."/>
            <person name="Tammoja K."/>
            <person name="Tan S.L."/>
            <person name="Tang S."/>
            <person name="Taylor M.S."/>
            <person name="Tegner J."/>
            <person name="Teichmann S.A."/>
            <person name="Ueda H.R."/>
            <person name="van Nimwegen E."/>
            <person name="Verardo R."/>
            <person name="Wei C.L."/>
            <person name="Yagi K."/>
            <person name="Yamanishi H."/>
            <person name="Zabarovsky E."/>
            <person name="Zhu S."/>
            <person name="Zimmer A."/>
            <person name="Hide W."/>
            <person name="Bult C."/>
            <person name="Grimmond S.M."/>
            <person name="Teasdale R.D."/>
            <person name="Liu E.T."/>
            <person name="Brusic V."/>
            <person name="Quackenbush J."/>
            <person name="Wahlestedt C."/>
            <person name="Mattick J.S."/>
            <person name="Hume D.A."/>
            <person name="Kai C."/>
            <person name="Sasaki D."/>
            <person name="Tomaru Y."/>
            <person name="Fukuda S."/>
            <person name="Kanamori-Katayama M."/>
            <person name="Suzuki M."/>
            <person name="Aoki J."/>
            <person name="Arakawa T."/>
            <person name="Iida J."/>
            <person name="Imamura K."/>
            <person name="Itoh M."/>
            <person name="Kato T."/>
            <person name="Kawaji H."/>
            <person name="Kawagashira N."/>
            <person name="Kawashima T."/>
            <person name="Kojima M."/>
            <person name="Kondo S."/>
            <person name="Konno H."/>
            <person name="Nakano K."/>
            <person name="Ninomiya N."/>
            <person name="Nishio T."/>
            <person name="Okada M."/>
            <person name="Plessy C."/>
            <person name="Shibata K."/>
            <person name="Shiraki T."/>
            <person name="Suzuki S."/>
            <person name="Tagami M."/>
            <person name="Waki K."/>
            <person name="Watahiki A."/>
            <person name="Okamura-Oho Y."/>
            <person name="Suzuki H."/>
            <person name="Kawai J."/>
            <person name="Hayashizaki Y."/>
        </authorList>
    </citation>
    <scope>NUCLEOTIDE SEQUENCE [LARGE SCALE MRNA]</scope>
    <source>
        <strain>C57BL/6J</strain>
        <tissue>Hypothalamus</tissue>
    </source>
</reference>
<reference key="3">
    <citation type="journal article" date="1997" name="Proc. Natl. Acad. Sci. U.S.A.">
        <title>Mice devoid of gamma-aminobutyrate type A receptor beta3 subunit have epilepsy, cleft palate, and hypersensitive behavior.</title>
        <authorList>
            <person name="Homanics G.E."/>
            <person name="DeLorey T.M."/>
            <person name="Firestone L.L."/>
            <person name="Quinlan J.J."/>
            <person name="Handforth A."/>
            <person name="Harrison N.L."/>
            <person name="Krasowski M.D."/>
            <person name="Rick C.E."/>
            <person name="Korpi E.R."/>
            <person name="Makela R."/>
            <person name="Brilliant M.H."/>
            <person name="Hagiwara N."/>
            <person name="Ferguson C."/>
            <person name="Snyder K."/>
            <person name="Olsen R.W."/>
        </authorList>
    </citation>
    <scope>DISRUPTION PHENOTYPE</scope>
    <scope>FUNCTION</scope>
    <scope>TRANSPORTER ACTIVITY</scope>
</reference>
<reference key="4">
    <citation type="journal article" date="2000" name="Neuroscience">
        <title>Sensory thresholds and the antinociceptive effects of GABA receptor agonists in mice lacking the beta3 subunit of the GABA(A) receptor.</title>
        <authorList>
            <person name="Ugarte S.D."/>
            <person name="Homanics G.E."/>
            <person name="Firestone L.L."/>
            <person name="Hammond D.L."/>
        </authorList>
    </citation>
    <scope>DISRUPTION PHENOTYPE</scope>
    <scope>FUNCTION</scope>
</reference>
<reference key="5">
    <citation type="journal article" date="2016" name="J. Biol. Chem.">
        <title>Gamma-aminobutyric acid type A (GABAA) receptor subunits play a direct structural role in synaptic contact formation via their N-terminal extracellular domains.</title>
        <authorList>
            <person name="Brown L.E."/>
            <person name="Nicholson M.W."/>
            <person name="Arama J.E."/>
            <person name="Mercer A."/>
            <person name="Thomson A.M."/>
            <person name="Jovanovic J.N."/>
        </authorList>
    </citation>
    <scope>FUNCTION</scope>
</reference>
<reference key="6">
    <citation type="journal article" date="2017" name="Cell Rep.">
        <title>An essential role for the tetraspanin LHFPL4 in the cell-type-specific targeting and clustering of synaptic GABAA ceceptors.</title>
        <authorList>
            <person name="Davenport E.C."/>
            <person name="Pendolino V."/>
            <person name="Kontou G."/>
            <person name="McGee T.P."/>
            <person name="Sheehan D.F."/>
            <person name="Lopez-Domenech G."/>
            <person name="Farrant M."/>
            <person name="Kittler J.T."/>
        </authorList>
    </citation>
    <scope>SUBCELLULAR LOCATION</scope>
    <scope>INTERACTION WITH LHFLP4</scope>
</reference>
<sequence length="473" mass="54166">MWGFAGGRLFGIFSAPVLVAVVCCAQSVNDPGNMSFVKETVDKLLKGYDIRLRPDFGGPPVCVGMNIDIASIDMVSEVNMDYTLTMYFQQYWRDKRLAYSGIPLNLTLDNRVADQLWVPDTYFLNDKKSFVHGVTVKNRMIRLHPDGTVLYGLRITTTAACMMDLRRYPLDEQNCTLEIESYGYTTDDIEFYWRGGDKAVTGVERIELPQFSIVEHRLVSRNVVFATGAYPRLSLSFRLKRNIGYFILQTYMPSILITILSWVSFWINYDASAARVALGITTVLTMTTINTHLRETLPKIPYVKAIDMYLMGCFVFVFLALLEYAFVNYIFFGRGPQRQKKLAEKTAKAKNDRSKSEINRVDAHGNILLAPMDVHNEMNEVAGSVGDTRNSAISFDNSGIQYRKQSMPKEGHGRYMGDRSIPHKKTHLRRRSSQLKIKIPDLTDVNAIDRWSRIVFPFTFSLFNLVYWLYYVN</sequence>
<protein>
    <recommendedName>
        <fullName evidence="1">Gamma-aminobutyric acid receptor subunit beta-3</fullName>
    </recommendedName>
    <alternativeName>
        <fullName evidence="1">GABA(A) receptor subunit beta-3</fullName>
        <shortName evidence="1">GABAAR subunit beta-3</shortName>
    </alternativeName>
</protein>
<feature type="signal peptide" evidence="3">
    <location>
        <begin position="1"/>
        <end position="25"/>
    </location>
</feature>
<feature type="chain" id="PRO_0000000463" description="Gamma-aminobutyric acid receptor subunit beta-3">
    <location>
        <begin position="26"/>
        <end position="473"/>
    </location>
</feature>
<feature type="topological domain" description="Extracellular" evidence="1">
    <location>
        <begin position="26"/>
        <end position="246"/>
    </location>
</feature>
<feature type="transmembrane region" description="Helical" evidence="1">
    <location>
        <begin position="247"/>
        <end position="267"/>
    </location>
</feature>
<feature type="topological domain" description="Cytoplasmic" evidence="1">
    <location>
        <begin position="268"/>
        <end position="271"/>
    </location>
</feature>
<feature type="transmembrane region" description="Helical" evidence="1">
    <location>
        <begin position="272"/>
        <end position="292"/>
    </location>
</feature>
<feature type="topological domain" description="Extracellular" evidence="1">
    <location>
        <begin position="293"/>
        <end position="304"/>
    </location>
</feature>
<feature type="transmembrane region" description="Helical" evidence="1">
    <location>
        <begin position="305"/>
        <end position="328"/>
    </location>
</feature>
<feature type="topological domain" description="Cytoplasmic" evidence="1">
    <location>
        <begin position="329"/>
        <end position="447"/>
    </location>
</feature>
<feature type="transmembrane region" description="Helical" evidence="1">
    <location>
        <begin position="448"/>
        <end position="470"/>
    </location>
</feature>
<feature type="topological domain" description="Extracellular" evidence="8">
    <location>
        <begin position="471"/>
        <end position="473"/>
    </location>
</feature>
<feature type="binding site" description="in chain B" evidence="1">
    <location>
        <position position="122"/>
    </location>
    <ligand>
        <name>histamine</name>
        <dbReference type="ChEBI" id="CHEBI:58432"/>
        <note>ligand shared between two neighboring beta subunits</note>
    </ligand>
</feature>
<feature type="binding site" description="in chain A" evidence="1">
    <location>
        <position position="180"/>
    </location>
    <ligand>
        <name>4-aminobutanoate</name>
        <dbReference type="ChEBI" id="CHEBI:59888"/>
        <note>ligand shared with the neighboring alpha subunit</note>
    </ligand>
</feature>
<feature type="binding site" description="in chain B" evidence="1">
    <location>
        <begin position="181"/>
        <end position="182"/>
    </location>
    <ligand>
        <name>histamine</name>
        <dbReference type="ChEBI" id="CHEBI:58432"/>
        <note>ligand shared between two neighboring beta subunits</note>
    </ligand>
</feature>
<feature type="binding site" description="in chain A" evidence="1">
    <location>
        <position position="182"/>
    </location>
    <ligand>
        <name>4-aminobutanoate</name>
        <dbReference type="ChEBI" id="CHEBI:59888"/>
        <note>ligand shared with the neighboring alpha subunit</note>
    </ligand>
</feature>
<feature type="binding site" description="in chain A" evidence="1">
    <location>
        <position position="227"/>
    </location>
    <ligand>
        <name>4-aminobutanoate</name>
        <dbReference type="ChEBI" id="CHEBI:59888"/>
        <note>ligand shared with the neighboring alpha subunit</note>
    </ligand>
</feature>
<feature type="binding site" description="in chain B" evidence="1">
    <location>
        <position position="227"/>
    </location>
    <ligand>
        <name>histamine</name>
        <dbReference type="ChEBI" id="CHEBI:58432"/>
        <note>ligand shared between two neighboring beta subunits</note>
    </ligand>
</feature>
<feature type="glycosylation site" description="N-linked (GlcNAc...) asparagine" evidence="3">
    <location>
        <position position="33"/>
    </location>
</feature>
<feature type="glycosylation site" description="N-linked (GlcNAc...) asparagine" evidence="3">
    <location>
        <position position="105"/>
    </location>
</feature>
<feature type="glycosylation site" description="N-linked (GlcNAc...) asparagine" evidence="3">
    <location>
        <position position="174"/>
    </location>
</feature>
<feature type="disulfide bond" evidence="1">
    <location>
        <begin position="161"/>
        <end position="175"/>
    </location>
</feature>
<name>GBRB3_MOUSE</name>
<organism>
    <name type="scientific">Mus musculus</name>
    <name type="common">Mouse</name>
    <dbReference type="NCBI Taxonomy" id="10090"/>
    <lineage>
        <taxon>Eukaryota</taxon>
        <taxon>Metazoa</taxon>
        <taxon>Chordata</taxon>
        <taxon>Craniata</taxon>
        <taxon>Vertebrata</taxon>
        <taxon>Euteleostomi</taxon>
        <taxon>Mammalia</taxon>
        <taxon>Eutheria</taxon>
        <taxon>Euarchontoglires</taxon>
        <taxon>Glires</taxon>
        <taxon>Rodentia</taxon>
        <taxon>Myomorpha</taxon>
        <taxon>Muroidea</taxon>
        <taxon>Muridae</taxon>
        <taxon>Murinae</taxon>
        <taxon>Mus</taxon>
        <taxon>Mus</taxon>
    </lineage>
</organism>
<keyword id="KW-1003">Cell membrane</keyword>
<keyword id="KW-0868">Chloride</keyword>
<keyword id="KW-0869">Chloride channel</keyword>
<keyword id="KW-0968">Cytoplasmic vesicle</keyword>
<keyword id="KW-1015">Disulfide bond</keyword>
<keyword id="KW-0325">Glycoprotein</keyword>
<keyword id="KW-0407">Ion channel</keyword>
<keyword id="KW-0406">Ion transport</keyword>
<keyword id="KW-1071">Ligand-gated ion channel</keyword>
<keyword id="KW-0472">Membrane</keyword>
<keyword id="KW-0628">Postsynaptic cell membrane</keyword>
<keyword id="KW-0675">Receptor</keyword>
<keyword id="KW-1185">Reference proteome</keyword>
<keyword id="KW-0732">Signal</keyword>
<keyword id="KW-0770">Synapse</keyword>
<keyword id="KW-0812">Transmembrane</keyword>
<keyword id="KW-1133">Transmembrane helix</keyword>
<keyword id="KW-0813">Transport</keyword>
<gene>
    <name evidence="9" type="primary">Gabrb3</name>
    <name type="synonym">Gabrb-3</name>
</gene>